<organism>
    <name type="scientific">Ruegeria sp. (strain TM1040)</name>
    <name type="common">Silicibacter sp.</name>
    <dbReference type="NCBI Taxonomy" id="292414"/>
    <lineage>
        <taxon>Bacteria</taxon>
        <taxon>Pseudomonadati</taxon>
        <taxon>Pseudomonadota</taxon>
        <taxon>Alphaproteobacteria</taxon>
        <taxon>Rhodobacterales</taxon>
        <taxon>Roseobacteraceae</taxon>
        <taxon>Ruegeria</taxon>
    </lineage>
</organism>
<proteinExistence type="inferred from homology"/>
<name>Y3562_RUEST</name>
<gene>
    <name type="ordered locus">TM1040_3562</name>
</gene>
<reference key="1">
    <citation type="submission" date="2006-05" db="EMBL/GenBank/DDBJ databases">
        <title>Complete sequence of megaplasmid of Silicibacter sp. TM1040.</title>
        <authorList>
            <consortium name="US DOE Joint Genome Institute"/>
            <person name="Copeland A."/>
            <person name="Lucas S."/>
            <person name="Lapidus A."/>
            <person name="Barry K."/>
            <person name="Detter J.C."/>
            <person name="Glavina del Rio T."/>
            <person name="Hammon N."/>
            <person name="Israni S."/>
            <person name="Dalin E."/>
            <person name="Tice H."/>
            <person name="Pitluck S."/>
            <person name="Brettin T."/>
            <person name="Bruce D."/>
            <person name="Han C."/>
            <person name="Tapia R."/>
            <person name="Goodwin L."/>
            <person name="Thompson L.S."/>
            <person name="Gilna P."/>
            <person name="Schmutz J."/>
            <person name="Larimer F."/>
            <person name="Land M."/>
            <person name="Hauser L."/>
            <person name="Kyrpides N."/>
            <person name="Kim E."/>
            <person name="Belas R."/>
            <person name="Moran M.A."/>
            <person name="Buchan A."/>
            <person name="Gonzalez J.M."/>
            <person name="Schell M.A."/>
            <person name="Sun F."/>
            <person name="Richardson P."/>
        </authorList>
    </citation>
    <scope>NUCLEOTIDE SEQUENCE [LARGE SCALE GENOMIC DNA]</scope>
    <source>
        <strain>TM1040</strain>
    </source>
</reference>
<evidence type="ECO:0000255" key="1">
    <source>
        <dbReference type="HAMAP-Rule" id="MF_00678"/>
    </source>
</evidence>
<evidence type="ECO:0000256" key="2">
    <source>
        <dbReference type="SAM" id="MobiDB-lite"/>
    </source>
</evidence>
<keyword id="KW-0614">Plasmid</keyword>
<keyword id="KW-1185">Reference proteome</keyword>
<geneLocation type="plasmid">
    <name>megaplasmid TM1040</name>
</geneLocation>
<dbReference type="EMBL" id="CP000376">
    <property type="protein sequence ID" value="ABF62531.1"/>
    <property type="molecule type" value="Genomic_DNA"/>
</dbReference>
<dbReference type="RefSeq" id="WP_011537170.1">
    <property type="nucleotide sequence ID" value="NC_008043.1"/>
</dbReference>
<dbReference type="KEGG" id="sit:TM1040_3562"/>
<dbReference type="HOGENOM" id="CLU_112904_0_0_5"/>
<dbReference type="OrthoDB" id="9798434at2"/>
<dbReference type="Proteomes" id="UP000000636">
    <property type="component" value="Plasmid megaplasmid TM1040"/>
</dbReference>
<dbReference type="HAMAP" id="MF_00678">
    <property type="entry name" value="UPF0262"/>
    <property type="match status" value="1"/>
</dbReference>
<dbReference type="InterPro" id="IPR008321">
    <property type="entry name" value="UCP032146"/>
</dbReference>
<dbReference type="NCBIfam" id="NF002769">
    <property type="entry name" value="PRK02853.1"/>
    <property type="match status" value="1"/>
</dbReference>
<dbReference type="Pfam" id="PF06793">
    <property type="entry name" value="UPF0262"/>
    <property type="match status" value="1"/>
</dbReference>
<dbReference type="PIRSF" id="PIRSF032146">
    <property type="entry name" value="UCP032146"/>
    <property type="match status" value="1"/>
</dbReference>
<protein>
    <recommendedName>
        <fullName evidence="1">UPF0262 protein TM1040_3562</fullName>
    </recommendedName>
</protein>
<accession>Q1GLD5</accession>
<comment type="similarity">
    <text evidence="1">Belongs to the UPF0262 family.</text>
</comment>
<sequence>MSRISQIELDDRNLPPPTPEIEQERKVAIFDLIEENSFVLPKRDERDVPEGPYHLSLSIREKRLVFDVQTEGGDKAAEFHLSLSPFRQVVKDYYQICESYFTAVKTLPPSQIETIDMARRGIHNEGSRVLQERLEGKAEVDTDTARRLFTLICVLHFGG</sequence>
<feature type="chain" id="PRO_0000314218" description="UPF0262 protein TM1040_3562">
    <location>
        <begin position="1"/>
        <end position="159"/>
    </location>
</feature>
<feature type="region of interest" description="Disordered" evidence="2">
    <location>
        <begin position="1"/>
        <end position="21"/>
    </location>
</feature>